<comment type="function">
    <text>Actins are highly conserved proteins that are involved in various types of cell motility and are ubiquitously expressed in all eukaryotic cells.</text>
</comment>
<comment type="catalytic activity">
    <reaction evidence="6">
        <text>ATP + H2O = ADP + phosphate + H(+)</text>
        <dbReference type="Rhea" id="RHEA:13065"/>
        <dbReference type="ChEBI" id="CHEBI:15377"/>
        <dbReference type="ChEBI" id="CHEBI:15378"/>
        <dbReference type="ChEBI" id="CHEBI:30616"/>
        <dbReference type="ChEBI" id="CHEBI:43474"/>
        <dbReference type="ChEBI" id="CHEBI:456216"/>
    </reaction>
</comment>
<comment type="subcellular location">
    <subcellularLocation>
        <location>Cytoplasm</location>
        <location>Cytoskeleton</location>
    </subcellularLocation>
</comment>
<comment type="PTM">
    <text evidence="4">Oxidation of Met-45 and Met-48 by MICALs (MICAL1, MICAL2 or MICAL3) to form methionine sulfoxide promotes actin filament depolymerization. MICAL1 and MICAL2 produce the (R)-S-oxide form. The (R)-S-oxide form is reverted by MSRB1 and MSRB2, which promotes actin repolymerization.</text>
</comment>
<comment type="PTM">
    <text evidence="3">Monomethylation at Lys-85 (K85me1) regulates actin-myosin interaction and actomyosin-dependent processes. Demethylation by ALKBH4 is required for maintaining actomyosin dynamics supporting normal cleavage furrow ingression during cytokinesis and cell migration.</text>
</comment>
<comment type="similarity">
    <text evidence="7">Belongs to the actin family.</text>
</comment>
<feature type="initiator methionine" description="Removed">
    <location>
        <position position="1"/>
    </location>
</feature>
<feature type="chain" id="PRO_0000443005" description="Actin, cytoplasmic, intermediate form" evidence="1">
    <location>
        <begin position="2"/>
        <end position="376"/>
    </location>
</feature>
<feature type="chain" id="PRO_0000000623" description="Actin, cytoplasmic" evidence="5">
    <location>
        <begin position="3"/>
        <end position="376"/>
    </location>
</feature>
<feature type="modified residue" description="N-acetylcysteine; in intermediate form" evidence="1">
    <location>
        <position position="2"/>
    </location>
</feature>
<feature type="modified residue" description="N-acetylaspartate; in Actin, cytoplasmic" evidence="5">
    <location>
        <position position="3"/>
    </location>
</feature>
<feature type="modified residue" description="Methionine (R)-sulfoxide" evidence="4">
    <location>
        <position position="45"/>
    </location>
</feature>
<feature type="modified residue" description="Methionine (R)-sulfoxide" evidence="4">
    <location>
        <position position="48"/>
    </location>
</feature>
<feature type="modified residue" description="Tele-methylhistidine" evidence="2">
    <location>
        <position position="74"/>
    </location>
</feature>
<feature type="modified residue" description="N6-methyllysine" evidence="3">
    <location>
        <position position="85"/>
    </location>
</feature>
<keyword id="KW-0007">Acetylation</keyword>
<keyword id="KW-0067">ATP-binding</keyword>
<keyword id="KW-0963">Cytoplasm</keyword>
<keyword id="KW-0206">Cytoskeleton</keyword>
<keyword id="KW-0378">Hydrolase</keyword>
<keyword id="KW-0488">Methylation</keyword>
<keyword id="KW-0547">Nucleotide-binding</keyword>
<keyword id="KW-0558">Oxidation</keyword>
<accession>Q964E3</accession>
<dbReference type="EC" id="3.6.4.-" evidence="6"/>
<dbReference type="EMBL" id="AF329437">
    <property type="protein sequence ID" value="AAK68711.1"/>
    <property type="molecule type" value="Genomic_DNA"/>
</dbReference>
<dbReference type="SMR" id="Q964E3"/>
<dbReference type="GO" id="GO:0005737">
    <property type="term" value="C:cytoplasm"/>
    <property type="evidence" value="ECO:0007669"/>
    <property type="project" value="UniProtKB-KW"/>
</dbReference>
<dbReference type="GO" id="GO:0005856">
    <property type="term" value="C:cytoskeleton"/>
    <property type="evidence" value="ECO:0007669"/>
    <property type="project" value="UniProtKB-SubCell"/>
</dbReference>
<dbReference type="GO" id="GO:0005524">
    <property type="term" value="F:ATP binding"/>
    <property type="evidence" value="ECO:0007669"/>
    <property type="project" value="UniProtKB-KW"/>
</dbReference>
<dbReference type="GO" id="GO:0016787">
    <property type="term" value="F:hydrolase activity"/>
    <property type="evidence" value="ECO:0007669"/>
    <property type="project" value="UniProtKB-KW"/>
</dbReference>
<dbReference type="CDD" id="cd10224">
    <property type="entry name" value="ASKHA_NBD_actin"/>
    <property type="match status" value="1"/>
</dbReference>
<dbReference type="FunFam" id="2.30.36.70:FF:000001">
    <property type="entry name" value="Actin, alpha skeletal muscle"/>
    <property type="match status" value="1"/>
</dbReference>
<dbReference type="FunFam" id="3.30.420.40:FF:000131">
    <property type="entry name" value="Actin, alpha skeletal muscle"/>
    <property type="match status" value="1"/>
</dbReference>
<dbReference type="FunFam" id="3.30.420.40:FF:000291">
    <property type="entry name" value="Actin, alpha skeletal muscle"/>
    <property type="match status" value="1"/>
</dbReference>
<dbReference type="FunFam" id="3.90.640.10:FF:000047">
    <property type="entry name" value="Actin, alpha skeletal muscle"/>
    <property type="match status" value="1"/>
</dbReference>
<dbReference type="FunFam" id="3.30.420.40:FF:000058">
    <property type="entry name" value="Putative actin-related protein 5"/>
    <property type="match status" value="1"/>
</dbReference>
<dbReference type="Gene3D" id="3.30.420.40">
    <property type="match status" value="2"/>
</dbReference>
<dbReference type="Gene3D" id="3.90.640.10">
    <property type="entry name" value="Actin, Chain A, domain 4"/>
    <property type="match status" value="1"/>
</dbReference>
<dbReference type="InterPro" id="IPR004000">
    <property type="entry name" value="Actin"/>
</dbReference>
<dbReference type="InterPro" id="IPR020902">
    <property type="entry name" value="Actin/actin-like_CS"/>
</dbReference>
<dbReference type="InterPro" id="IPR004001">
    <property type="entry name" value="Actin_CS"/>
</dbReference>
<dbReference type="InterPro" id="IPR043129">
    <property type="entry name" value="ATPase_NBD"/>
</dbReference>
<dbReference type="PANTHER" id="PTHR11937">
    <property type="entry name" value="ACTIN"/>
    <property type="match status" value="1"/>
</dbReference>
<dbReference type="Pfam" id="PF00022">
    <property type="entry name" value="Actin"/>
    <property type="match status" value="1"/>
</dbReference>
<dbReference type="PRINTS" id="PR00190">
    <property type="entry name" value="ACTIN"/>
</dbReference>
<dbReference type="SMART" id="SM00268">
    <property type="entry name" value="ACTIN"/>
    <property type="match status" value="1"/>
</dbReference>
<dbReference type="SUPFAM" id="SSF53067">
    <property type="entry name" value="Actin-like ATPase domain"/>
    <property type="match status" value="2"/>
</dbReference>
<dbReference type="PROSITE" id="PS00406">
    <property type="entry name" value="ACTINS_1"/>
    <property type="match status" value="1"/>
</dbReference>
<dbReference type="PROSITE" id="PS00432">
    <property type="entry name" value="ACTINS_2"/>
    <property type="match status" value="1"/>
</dbReference>
<dbReference type="PROSITE" id="PS01132">
    <property type="entry name" value="ACTINS_ACT_LIKE"/>
    <property type="match status" value="1"/>
</dbReference>
<name>ACTC_BIOAL</name>
<protein>
    <recommendedName>
        <fullName>Actin, cytoplasmic</fullName>
        <ecNumber evidence="6">3.6.4.-</ecNumber>
    </recommendedName>
    <component>
        <recommendedName>
            <fullName>Actin, cytoplasmic, intermediate form</fullName>
        </recommendedName>
    </component>
</protein>
<reference key="1">
    <citation type="journal article" date="2002" name="J. Molluscan Stud.">
        <title>Comparative study of cytoplasmic actin DNA from six species of Planorbidae (Gastropoda: Basommatophora).</title>
        <authorList>
            <person name="Adema C.M."/>
        </authorList>
    </citation>
    <scope>NUCLEOTIDE SEQUENCE [GENOMIC DNA]</scope>
</reference>
<organism>
    <name type="scientific">Biomphalaria alexandrina</name>
    <name type="common">Bloodfluke planorb</name>
    <name type="synonym">Freshwater snail</name>
    <dbReference type="NCBI Taxonomy" id="50959"/>
    <lineage>
        <taxon>Eukaryota</taxon>
        <taxon>Metazoa</taxon>
        <taxon>Spiralia</taxon>
        <taxon>Lophotrochozoa</taxon>
        <taxon>Mollusca</taxon>
        <taxon>Gastropoda</taxon>
        <taxon>Heterobranchia</taxon>
        <taxon>Euthyneura</taxon>
        <taxon>Panpulmonata</taxon>
        <taxon>Hygrophila</taxon>
        <taxon>Lymnaeoidea</taxon>
        <taxon>Planorbidae</taxon>
        <taxon>Biomphalaria</taxon>
    </lineage>
</organism>
<evidence type="ECO:0000250" key="1">
    <source>
        <dbReference type="UniProtKB" id="P62737"/>
    </source>
</evidence>
<evidence type="ECO:0000250" key="2">
    <source>
        <dbReference type="UniProtKB" id="P62739"/>
    </source>
</evidence>
<evidence type="ECO:0000250" key="3">
    <source>
        <dbReference type="UniProtKB" id="P68032"/>
    </source>
</evidence>
<evidence type="ECO:0000250" key="4">
    <source>
        <dbReference type="UniProtKB" id="P68033"/>
    </source>
</evidence>
<evidence type="ECO:0000250" key="5">
    <source>
        <dbReference type="UniProtKB" id="P68135"/>
    </source>
</evidence>
<evidence type="ECO:0000250" key="6">
    <source>
        <dbReference type="UniProtKB" id="P68137"/>
    </source>
</evidence>
<evidence type="ECO:0000305" key="7"/>
<sequence length="376" mass="41911">MCDEDVAALVVDNGSGMCKAGFAGDDAPRAVFPSIVGRPRHQGVMVGMGQKDSYVGDEAQSKRGILTLKYPIEHGIVTNWDDMEKIWHHTFYNELRVAPEEHPVLLTEAPLNPKANREKMTQIMFETFNTPAMYVAIQAVLSLYASGRTTGIVMDSGDGVTHTVPIYEGYALPHAIMRLDLAGRDLTDYLMKILTERGYSFTTTAEREIVRDIKEKLCYVALDFEQEMQTASTSSSLEKSYELPDGQVITIGNERFRCPEAMFQPSFLGMEAAGIHETTYNSIMKCDVDIRKDLYANTVLSGGSTMFPGIADRMQKEITALAPPTMKIKIIAPPERKYSVWIGGSILASLSTFQQMWISKQEYDESGPSIVHRKCF</sequence>
<proteinExistence type="inferred from homology"/>